<accession>Q03508</accession>
<accession>D6W091</accession>
<protein>
    <recommendedName>
        <fullName>Uncharacterized protein YMR265C</fullName>
    </recommendedName>
</protein>
<dbReference type="EMBL" id="Z49260">
    <property type="protein sequence ID" value="CAA89248.1"/>
    <property type="molecule type" value="Genomic_DNA"/>
</dbReference>
<dbReference type="EMBL" id="BK006946">
    <property type="protein sequence ID" value="DAA10165.1"/>
    <property type="molecule type" value="Genomic_DNA"/>
</dbReference>
<dbReference type="PIR" id="S54477">
    <property type="entry name" value="S54477"/>
</dbReference>
<dbReference type="RefSeq" id="NP_013992.1">
    <property type="nucleotide sequence ID" value="NM_001182772.1"/>
</dbReference>
<dbReference type="BioGRID" id="35443">
    <property type="interactions" value="19"/>
</dbReference>
<dbReference type="DIP" id="DIP-5533N"/>
<dbReference type="FunCoup" id="Q03508">
    <property type="interactions" value="48"/>
</dbReference>
<dbReference type="IntAct" id="Q03508">
    <property type="interactions" value="3"/>
</dbReference>
<dbReference type="MINT" id="Q03508"/>
<dbReference type="STRING" id="4932.YMR265C"/>
<dbReference type="GlyGen" id="Q03508">
    <property type="glycosylation" value="1 site"/>
</dbReference>
<dbReference type="iPTMnet" id="Q03508"/>
<dbReference type="PaxDb" id="4932-YMR265C"/>
<dbReference type="PeptideAtlas" id="Q03508"/>
<dbReference type="EnsemblFungi" id="YMR265C_mRNA">
    <property type="protein sequence ID" value="YMR265C"/>
    <property type="gene ID" value="YMR265C"/>
</dbReference>
<dbReference type="GeneID" id="855307"/>
<dbReference type="KEGG" id="sce:YMR265C"/>
<dbReference type="AGR" id="SGD:S000004878"/>
<dbReference type="SGD" id="S000004878">
    <property type="gene designation" value="YMR265C"/>
</dbReference>
<dbReference type="VEuPathDB" id="FungiDB:YMR265C"/>
<dbReference type="eggNOG" id="ENOG502S30I">
    <property type="taxonomic scope" value="Eukaryota"/>
</dbReference>
<dbReference type="HOGENOM" id="CLU_022771_1_1_1"/>
<dbReference type="InParanoid" id="Q03508"/>
<dbReference type="OMA" id="WNSCACE"/>
<dbReference type="OrthoDB" id="5596992at2759"/>
<dbReference type="BioCyc" id="YEAST:G3O-32939-MONOMER"/>
<dbReference type="BioGRID-ORCS" id="855307">
    <property type="hits" value="0 hits in 10 CRISPR screens"/>
</dbReference>
<dbReference type="PRO" id="PR:Q03508"/>
<dbReference type="Proteomes" id="UP000002311">
    <property type="component" value="Chromosome XIII"/>
</dbReference>
<dbReference type="RNAct" id="Q03508">
    <property type="molecule type" value="protein"/>
</dbReference>
<dbReference type="GO" id="GO:0031428">
    <property type="term" value="C:box C/D methylation guide snoRNP complex"/>
    <property type="evidence" value="ECO:0000318"/>
    <property type="project" value="GO_Central"/>
</dbReference>
<dbReference type="GO" id="GO:0005730">
    <property type="term" value="C:nucleolus"/>
    <property type="evidence" value="ECO:0000318"/>
    <property type="project" value="GO_Central"/>
</dbReference>
<dbReference type="GO" id="GO:0032040">
    <property type="term" value="C:small-subunit processome"/>
    <property type="evidence" value="ECO:0000318"/>
    <property type="project" value="GO_Central"/>
</dbReference>
<dbReference type="GO" id="GO:1990259">
    <property type="term" value="F:histone H2AQ104 methyltransferase activity"/>
    <property type="evidence" value="ECO:0000318"/>
    <property type="project" value="GO_Central"/>
</dbReference>
<dbReference type="GO" id="GO:0003723">
    <property type="term" value="F:RNA binding"/>
    <property type="evidence" value="ECO:0000318"/>
    <property type="project" value="GO_Central"/>
</dbReference>
<dbReference type="GO" id="GO:0008649">
    <property type="term" value="F:rRNA methyltransferase activity"/>
    <property type="evidence" value="ECO:0000318"/>
    <property type="project" value="GO_Central"/>
</dbReference>
<dbReference type="GO" id="GO:0000494">
    <property type="term" value="P:box C/D sno(s)RNA 3'-end processing"/>
    <property type="evidence" value="ECO:0000318"/>
    <property type="project" value="GO_Central"/>
</dbReference>
<dbReference type="GO" id="GO:0031167">
    <property type="term" value="P:rRNA methylation"/>
    <property type="evidence" value="ECO:0000318"/>
    <property type="project" value="GO_Central"/>
</dbReference>
<dbReference type="InterPro" id="IPR018812">
    <property type="entry name" value="SAK_HAD"/>
</dbReference>
<dbReference type="InterPro" id="IPR056904">
    <property type="entry name" value="YMR265C_C"/>
</dbReference>
<dbReference type="PANTHER" id="PTHR10335:SF26">
    <property type="entry name" value="AER281CP"/>
    <property type="match status" value="1"/>
</dbReference>
<dbReference type="PANTHER" id="PTHR10335">
    <property type="entry name" value="RRNA 2-O-METHYLTRANSFERASE FIBRILLARIN"/>
    <property type="match status" value="1"/>
</dbReference>
<dbReference type="Pfam" id="PF10307">
    <property type="entry name" value="HAD_SAK_1"/>
    <property type="match status" value="1"/>
</dbReference>
<dbReference type="Pfam" id="PF25108">
    <property type="entry name" value="YMR265C_C"/>
    <property type="match status" value="1"/>
</dbReference>
<proteinExistence type="predicted"/>
<reference key="1">
    <citation type="journal article" date="1997" name="Nature">
        <title>The nucleotide sequence of Saccharomyces cerevisiae chromosome XIII.</title>
        <authorList>
            <person name="Bowman S."/>
            <person name="Churcher C.M."/>
            <person name="Badcock K."/>
            <person name="Brown D."/>
            <person name="Chillingworth T."/>
            <person name="Connor R."/>
            <person name="Dedman K."/>
            <person name="Devlin K."/>
            <person name="Gentles S."/>
            <person name="Hamlin N."/>
            <person name="Hunt S."/>
            <person name="Jagels K."/>
            <person name="Lye G."/>
            <person name="Moule S."/>
            <person name="Odell C."/>
            <person name="Pearson D."/>
            <person name="Rajandream M.A."/>
            <person name="Rice P."/>
            <person name="Skelton J."/>
            <person name="Walsh S.V."/>
            <person name="Whitehead S."/>
            <person name="Barrell B.G."/>
        </authorList>
    </citation>
    <scope>NUCLEOTIDE SEQUENCE [LARGE SCALE GENOMIC DNA]</scope>
    <source>
        <strain>ATCC 204508 / S288c</strain>
    </source>
</reference>
<reference key="2">
    <citation type="journal article" date="2014" name="G3 (Bethesda)">
        <title>The reference genome sequence of Saccharomyces cerevisiae: Then and now.</title>
        <authorList>
            <person name="Engel S.R."/>
            <person name="Dietrich F.S."/>
            <person name="Fisk D.G."/>
            <person name="Binkley G."/>
            <person name="Balakrishnan R."/>
            <person name="Costanzo M.C."/>
            <person name="Dwight S.S."/>
            <person name="Hitz B.C."/>
            <person name="Karra K."/>
            <person name="Nash R.S."/>
            <person name="Weng S."/>
            <person name="Wong E.D."/>
            <person name="Lloyd P."/>
            <person name="Skrzypek M.S."/>
            <person name="Miyasato S.R."/>
            <person name="Simison M."/>
            <person name="Cherry J.M."/>
        </authorList>
    </citation>
    <scope>GENOME REANNOTATION</scope>
    <source>
        <strain>ATCC 204508 / S288c</strain>
    </source>
</reference>
<name>YM8F_YEAST</name>
<gene>
    <name type="ordered locus">YMR265C</name>
    <name type="ORF">YM8156.07C</name>
</gene>
<organism>
    <name type="scientific">Saccharomyces cerevisiae (strain ATCC 204508 / S288c)</name>
    <name type="common">Baker's yeast</name>
    <dbReference type="NCBI Taxonomy" id="559292"/>
    <lineage>
        <taxon>Eukaryota</taxon>
        <taxon>Fungi</taxon>
        <taxon>Dikarya</taxon>
        <taxon>Ascomycota</taxon>
        <taxon>Saccharomycotina</taxon>
        <taxon>Saccharomycetes</taxon>
        <taxon>Saccharomycetales</taxon>
        <taxon>Saccharomycetaceae</taxon>
        <taxon>Saccharomyces</taxon>
    </lineage>
</organism>
<sequence length="461" mass="54106">MEEFEEFRRKGEMSSRCGNHRVLRKWNSCACELAVPFEVPEHAITKLHIYDFDNTLFATPGPTEQLYTRELLNLLTSSTLPNGGWWNEPGFLQAAIEISKTKPRRYSWNADIVKLAEESYSAKDTISIVLTGREESKFHKLIEHALQTARSHWKCSENEFRFNAVCLKKRAISEYTSKYKKELMRDFLEYYPSLRELSIYDDRIHQIDAFKSFFHSLDLPRLKWSAIPVRPFTKSLPREQELEMVMDMVRKNNSQALSTSQKFDLRRTPRQIGYILCTASHRLLSIEVIKYLKRRKGRRTFRPKLYEHPLYIPCAEPGKDIPALEIAKVWSNNDTRTFDSEKKVQHISQIFYLEQPGKCIVHFQVTDLAVIASAHHNRRKPLEVYFKATPEPNRYTFTLFPEYIVTGHFYKRDRIEDLEVVTERLINCKEDIHWVPLDNTIPIKAFFGRFAKLAAIPCSNA</sequence>
<feature type="chain" id="PRO_0000203347" description="Uncharacterized protein YMR265C">
    <location>
        <begin position="1"/>
        <end position="461"/>
    </location>
</feature>
<keyword id="KW-1185">Reference proteome</keyword>